<feature type="chain" id="PRO_0000254293" description="ATP synthase subunit beta 2">
    <location>
        <begin position="1"/>
        <end position="473"/>
    </location>
</feature>
<feature type="binding site" evidence="1">
    <location>
        <begin position="158"/>
        <end position="165"/>
    </location>
    <ligand>
        <name>ATP</name>
        <dbReference type="ChEBI" id="CHEBI:30616"/>
    </ligand>
</feature>
<name>ATPB2_LISMF</name>
<keyword id="KW-0066">ATP synthesis</keyword>
<keyword id="KW-0067">ATP-binding</keyword>
<keyword id="KW-1003">Cell membrane</keyword>
<keyword id="KW-0139">CF(1)</keyword>
<keyword id="KW-0375">Hydrogen ion transport</keyword>
<keyword id="KW-0406">Ion transport</keyword>
<keyword id="KW-0472">Membrane</keyword>
<keyword id="KW-0547">Nucleotide-binding</keyword>
<keyword id="KW-1278">Translocase</keyword>
<keyword id="KW-0813">Transport</keyword>
<accession>Q71WP9</accession>
<evidence type="ECO:0000255" key="1">
    <source>
        <dbReference type="HAMAP-Rule" id="MF_01347"/>
    </source>
</evidence>
<proteinExistence type="inferred from homology"/>
<protein>
    <recommendedName>
        <fullName evidence="1">ATP synthase subunit beta 2</fullName>
        <ecNumber evidence="1">7.1.2.2</ecNumber>
    </recommendedName>
    <alternativeName>
        <fullName evidence="1">ATP synthase F1 sector subunit beta 2</fullName>
    </alternativeName>
    <alternativeName>
        <fullName evidence="1">F-ATPase subunit beta 2</fullName>
    </alternativeName>
</protein>
<organism>
    <name type="scientific">Listeria monocytogenes serotype 4b (strain F2365)</name>
    <dbReference type="NCBI Taxonomy" id="265669"/>
    <lineage>
        <taxon>Bacteria</taxon>
        <taxon>Bacillati</taxon>
        <taxon>Bacillota</taxon>
        <taxon>Bacilli</taxon>
        <taxon>Bacillales</taxon>
        <taxon>Listeriaceae</taxon>
        <taxon>Listeria</taxon>
    </lineage>
</organism>
<dbReference type="EC" id="7.1.2.2" evidence="1"/>
<dbReference type="EMBL" id="AE017262">
    <property type="protein sequence ID" value="AAT05267.1"/>
    <property type="molecule type" value="Genomic_DNA"/>
</dbReference>
<dbReference type="SMR" id="Q71WP9"/>
<dbReference type="KEGG" id="lmf:LMOf2365_2502"/>
<dbReference type="HOGENOM" id="CLU_022398_0_2_9"/>
<dbReference type="GO" id="GO:0005886">
    <property type="term" value="C:plasma membrane"/>
    <property type="evidence" value="ECO:0007669"/>
    <property type="project" value="UniProtKB-SubCell"/>
</dbReference>
<dbReference type="GO" id="GO:0045259">
    <property type="term" value="C:proton-transporting ATP synthase complex"/>
    <property type="evidence" value="ECO:0007669"/>
    <property type="project" value="UniProtKB-KW"/>
</dbReference>
<dbReference type="GO" id="GO:0005524">
    <property type="term" value="F:ATP binding"/>
    <property type="evidence" value="ECO:0007669"/>
    <property type="project" value="UniProtKB-UniRule"/>
</dbReference>
<dbReference type="GO" id="GO:0016887">
    <property type="term" value="F:ATP hydrolysis activity"/>
    <property type="evidence" value="ECO:0007669"/>
    <property type="project" value="InterPro"/>
</dbReference>
<dbReference type="GO" id="GO:0046933">
    <property type="term" value="F:proton-transporting ATP synthase activity, rotational mechanism"/>
    <property type="evidence" value="ECO:0007669"/>
    <property type="project" value="UniProtKB-UniRule"/>
</dbReference>
<dbReference type="CDD" id="cd18110">
    <property type="entry name" value="ATP-synt_F1_beta_C"/>
    <property type="match status" value="1"/>
</dbReference>
<dbReference type="CDD" id="cd18115">
    <property type="entry name" value="ATP-synt_F1_beta_N"/>
    <property type="match status" value="1"/>
</dbReference>
<dbReference type="CDD" id="cd01133">
    <property type="entry name" value="F1-ATPase_beta_CD"/>
    <property type="match status" value="1"/>
</dbReference>
<dbReference type="FunFam" id="1.10.1140.10:FF:000001">
    <property type="entry name" value="ATP synthase subunit beta"/>
    <property type="match status" value="1"/>
</dbReference>
<dbReference type="FunFam" id="2.40.10.170:FF:000005">
    <property type="entry name" value="ATP synthase subunit beta"/>
    <property type="match status" value="1"/>
</dbReference>
<dbReference type="FunFam" id="3.40.50.300:FF:000004">
    <property type="entry name" value="ATP synthase subunit beta"/>
    <property type="match status" value="1"/>
</dbReference>
<dbReference type="Gene3D" id="2.40.10.170">
    <property type="match status" value="1"/>
</dbReference>
<dbReference type="Gene3D" id="1.10.1140.10">
    <property type="entry name" value="Bovine Mitochondrial F1-atpase, Atp Synthase Beta Chain, Chain D, domain 3"/>
    <property type="match status" value="1"/>
</dbReference>
<dbReference type="Gene3D" id="3.40.50.300">
    <property type="entry name" value="P-loop containing nucleotide triphosphate hydrolases"/>
    <property type="match status" value="1"/>
</dbReference>
<dbReference type="HAMAP" id="MF_01347">
    <property type="entry name" value="ATP_synth_beta_bact"/>
    <property type="match status" value="1"/>
</dbReference>
<dbReference type="InterPro" id="IPR003593">
    <property type="entry name" value="AAA+_ATPase"/>
</dbReference>
<dbReference type="InterPro" id="IPR055190">
    <property type="entry name" value="ATP-synt_VA_C"/>
</dbReference>
<dbReference type="InterPro" id="IPR005722">
    <property type="entry name" value="ATP_synth_F1_bsu"/>
</dbReference>
<dbReference type="InterPro" id="IPR020003">
    <property type="entry name" value="ATPase_a/bsu_AS"/>
</dbReference>
<dbReference type="InterPro" id="IPR050053">
    <property type="entry name" value="ATPase_alpha/beta_chains"/>
</dbReference>
<dbReference type="InterPro" id="IPR004100">
    <property type="entry name" value="ATPase_F1/V1/A1_a/bsu_N"/>
</dbReference>
<dbReference type="InterPro" id="IPR036121">
    <property type="entry name" value="ATPase_F1/V1/A1_a/bsu_N_sf"/>
</dbReference>
<dbReference type="InterPro" id="IPR000194">
    <property type="entry name" value="ATPase_F1/V1/A1_a/bsu_nucl-bd"/>
</dbReference>
<dbReference type="InterPro" id="IPR024034">
    <property type="entry name" value="ATPase_F1/V1_b/a_C"/>
</dbReference>
<dbReference type="InterPro" id="IPR027417">
    <property type="entry name" value="P-loop_NTPase"/>
</dbReference>
<dbReference type="NCBIfam" id="TIGR01039">
    <property type="entry name" value="atpD"/>
    <property type="match status" value="1"/>
</dbReference>
<dbReference type="PANTHER" id="PTHR15184">
    <property type="entry name" value="ATP SYNTHASE"/>
    <property type="match status" value="1"/>
</dbReference>
<dbReference type="PANTHER" id="PTHR15184:SF71">
    <property type="entry name" value="ATP SYNTHASE SUBUNIT BETA, MITOCHONDRIAL"/>
    <property type="match status" value="1"/>
</dbReference>
<dbReference type="Pfam" id="PF00006">
    <property type="entry name" value="ATP-synt_ab"/>
    <property type="match status" value="1"/>
</dbReference>
<dbReference type="Pfam" id="PF02874">
    <property type="entry name" value="ATP-synt_ab_N"/>
    <property type="match status" value="1"/>
</dbReference>
<dbReference type="Pfam" id="PF22919">
    <property type="entry name" value="ATP-synt_VA_C"/>
    <property type="match status" value="1"/>
</dbReference>
<dbReference type="SMART" id="SM00382">
    <property type="entry name" value="AAA"/>
    <property type="match status" value="1"/>
</dbReference>
<dbReference type="SUPFAM" id="SSF47917">
    <property type="entry name" value="C-terminal domain of alpha and beta subunits of F1 ATP synthase"/>
    <property type="match status" value="1"/>
</dbReference>
<dbReference type="SUPFAM" id="SSF50615">
    <property type="entry name" value="N-terminal domain of alpha and beta subunits of F1 ATP synthase"/>
    <property type="match status" value="1"/>
</dbReference>
<dbReference type="SUPFAM" id="SSF52540">
    <property type="entry name" value="P-loop containing nucleoside triphosphate hydrolases"/>
    <property type="match status" value="1"/>
</dbReference>
<dbReference type="PROSITE" id="PS00152">
    <property type="entry name" value="ATPASE_ALPHA_BETA"/>
    <property type="match status" value="1"/>
</dbReference>
<comment type="function">
    <text evidence="1">Produces ATP from ADP in the presence of a proton gradient across the membrane. The catalytic sites are hosted primarily by the beta subunits.</text>
</comment>
<comment type="catalytic activity">
    <reaction evidence="1">
        <text>ATP + H2O + 4 H(+)(in) = ADP + phosphate + 5 H(+)(out)</text>
        <dbReference type="Rhea" id="RHEA:57720"/>
        <dbReference type="ChEBI" id="CHEBI:15377"/>
        <dbReference type="ChEBI" id="CHEBI:15378"/>
        <dbReference type="ChEBI" id="CHEBI:30616"/>
        <dbReference type="ChEBI" id="CHEBI:43474"/>
        <dbReference type="ChEBI" id="CHEBI:456216"/>
        <dbReference type="EC" id="7.1.2.2"/>
    </reaction>
</comment>
<comment type="subunit">
    <text evidence="1">F-type ATPases have 2 components, CF(1) - the catalytic core - and CF(0) - the membrane proton channel. CF(1) has five subunits: alpha(3), beta(3), gamma(1), delta(1), epsilon(1). CF(0) has three main subunits: a(1), b(2) and c(9-12). The alpha and beta chains form an alternating ring which encloses part of the gamma chain. CF(1) is attached to CF(0) by a central stalk formed by the gamma and epsilon chains, while a peripheral stalk is formed by the delta and b chains.</text>
</comment>
<comment type="subcellular location">
    <subcellularLocation>
        <location evidence="1">Cell membrane</location>
        <topology evidence="1">Peripheral membrane protein</topology>
    </subcellularLocation>
</comment>
<comment type="similarity">
    <text evidence="1">Belongs to the ATPase alpha/beta chains family.</text>
</comment>
<sequence>MSKGQVIQVMGPVVDVKFEGGNLPEIYNALVIEYKSDAEEAPTSQLTLEVAIQLGDDVVRTIAMASTDGVQRGMEVIDTGSPITVPVGTVTLGRVFNVLGNTIDLDEPLPSDIKRNKIHREAPTFDQLATTTEILETGIKVVDLLAPYLKGGKIGLFGGAGVGKTVLIQELIHNIAQEHGGISVFAGVGERTREGNDLYFEMKDSGVIEKTAMVFGQMNEPPGARMRVALTGLTIAEYFRDEEHQDVLLFIDNIFRFTQAGSEVSALLGRMPSAVGYQPTLATEMGQLQERITSTNVGSVTSIQAIYVPADDYTDPAPATTFAHLDATTNLERKLTEQGIYPAVDPLASTSRALSPDIVGEEHYAVATEVQRLLQRYKELQDIIAILGMDELSDEDKQSVSRARRVQFFLSQNFHVAEQFTGQKGSYVPVKETVKGFKDLLAGKYDHIPEDAFRSVGRIEDVLEKAKDMGVEV</sequence>
<gene>
    <name evidence="1" type="primary">atpD2</name>
    <name type="ordered locus">LMOf2365_2502</name>
</gene>
<reference key="1">
    <citation type="journal article" date="2004" name="Nucleic Acids Res.">
        <title>Whole genome comparisons of serotype 4b and 1/2a strains of the food-borne pathogen Listeria monocytogenes reveal new insights into the core genome components of this species.</title>
        <authorList>
            <person name="Nelson K.E."/>
            <person name="Fouts D.E."/>
            <person name="Mongodin E.F."/>
            <person name="Ravel J."/>
            <person name="DeBoy R.T."/>
            <person name="Kolonay J.F."/>
            <person name="Rasko D.A."/>
            <person name="Angiuoli S.V."/>
            <person name="Gill S.R."/>
            <person name="Paulsen I.T."/>
            <person name="Peterson J.D."/>
            <person name="White O."/>
            <person name="Nelson W.C."/>
            <person name="Nierman W.C."/>
            <person name="Beanan M.J."/>
            <person name="Brinkac L.M."/>
            <person name="Daugherty S.C."/>
            <person name="Dodson R.J."/>
            <person name="Durkin A.S."/>
            <person name="Madupu R."/>
            <person name="Haft D.H."/>
            <person name="Selengut J."/>
            <person name="Van Aken S.E."/>
            <person name="Khouri H.M."/>
            <person name="Fedorova N."/>
            <person name="Forberger H.A."/>
            <person name="Tran B."/>
            <person name="Kathariou S."/>
            <person name="Wonderling L.D."/>
            <person name="Uhlich G.A."/>
            <person name="Bayles D.O."/>
            <person name="Luchansky J.B."/>
            <person name="Fraser C.M."/>
        </authorList>
    </citation>
    <scope>NUCLEOTIDE SEQUENCE [LARGE SCALE GENOMIC DNA]</scope>
    <source>
        <strain>F2365</strain>
    </source>
</reference>